<organism>
    <name type="scientific">Prochlorococcus marinus (strain SARG / CCMP1375 / SS120)</name>
    <dbReference type="NCBI Taxonomy" id="167539"/>
    <lineage>
        <taxon>Bacteria</taxon>
        <taxon>Bacillati</taxon>
        <taxon>Cyanobacteriota</taxon>
        <taxon>Cyanophyceae</taxon>
        <taxon>Synechococcales</taxon>
        <taxon>Prochlorococcaceae</taxon>
        <taxon>Prochlorococcus</taxon>
    </lineage>
</organism>
<comment type="function">
    <text evidence="1">Catalyzes the conversion of 4-hydroxy-tetrahydrodipicolinate (HTPA) to tetrahydrodipicolinate.</text>
</comment>
<comment type="catalytic activity">
    <reaction evidence="1">
        <text>(S)-2,3,4,5-tetrahydrodipicolinate + NAD(+) + H2O = (2S,4S)-4-hydroxy-2,3,4,5-tetrahydrodipicolinate + NADH + H(+)</text>
        <dbReference type="Rhea" id="RHEA:35323"/>
        <dbReference type="ChEBI" id="CHEBI:15377"/>
        <dbReference type="ChEBI" id="CHEBI:15378"/>
        <dbReference type="ChEBI" id="CHEBI:16845"/>
        <dbReference type="ChEBI" id="CHEBI:57540"/>
        <dbReference type="ChEBI" id="CHEBI:57945"/>
        <dbReference type="ChEBI" id="CHEBI:67139"/>
        <dbReference type="EC" id="1.17.1.8"/>
    </reaction>
</comment>
<comment type="catalytic activity">
    <reaction evidence="1">
        <text>(S)-2,3,4,5-tetrahydrodipicolinate + NADP(+) + H2O = (2S,4S)-4-hydroxy-2,3,4,5-tetrahydrodipicolinate + NADPH + H(+)</text>
        <dbReference type="Rhea" id="RHEA:35331"/>
        <dbReference type="ChEBI" id="CHEBI:15377"/>
        <dbReference type="ChEBI" id="CHEBI:15378"/>
        <dbReference type="ChEBI" id="CHEBI:16845"/>
        <dbReference type="ChEBI" id="CHEBI:57783"/>
        <dbReference type="ChEBI" id="CHEBI:58349"/>
        <dbReference type="ChEBI" id="CHEBI:67139"/>
        <dbReference type="EC" id="1.17.1.8"/>
    </reaction>
</comment>
<comment type="pathway">
    <text evidence="1">Amino-acid biosynthesis; L-lysine biosynthesis via DAP pathway; (S)-tetrahydrodipicolinate from L-aspartate: step 4/4.</text>
</comment>
<comment type="subcellular location">
    <subcellularLocation>
        <location evidence="1">Cytoplasm</location>
    </subcellularLocation>
</comment>
<comment type="similarity">
    <text evidence="1">Belongs to the DapB family.</text>
</comment>
<comment type="caution">
    <text evidence="2">Was originally thought to be a dihydrodipicolinate reductase (DHDPR), catalyzing the conversion of dihydrodipicolinate to tetrahydrodipicolinate. However, it was shown in E.coli that the substrate of the enzymatic reaction is not dihydrodipicolinate (DHDP) but in fact (2S,4S)-4-hydroxy-2,3,4,5-tetrahydrodipicolinic acid (HTPA), the product released by the DapA-catalyzed reaction.</text>
</comment>
<keyword id="KW-0028">Amino-acid biosynthesis</keyword>
<keyword id="KW-0963">Cytoplasm</keyword>
<keyword id="KW-0220">Diaminopimelate biosynthesis</keyword>
<keyword id="KW-0457">Lysine biosynthesis</keyword>
<keyword id="KW-0520">NAD</keyword>
<keyword id="KW-0521">NADP</keyword>
<keyword id="KW-0560">Oxidoreductase</keyword>
<keyword id="KW-1185">Reference proteome</keyword>
<protein>
    <recommendedName>
        <fullName evidence="1">4-hydroxy-tetrahydrodipicolinate reductase</fullName>
        <shortName evidence="1">HTPA reductase</shortName>
        <ecNumber evidence="1">1.17.1.8</ecNumber>
    </recommendedName>
</protein>
<accession>Q7VC38</accession>
<evidence type="ECO:0000255" key="1">
    <source>
        <dbReference type="HAMAP-Rule" id="MF_00102"/>
    </source>
</evidence>
<evidence type="ECO:0000305" key="2"/>
<gene>
    <name evidence="1" type="primary">dapB</name>
    <name type="ordered locus">Pro_0904</name>
</gene>
<feature type="chain" id="PRO_0000141465" description="4-hydroxy-tetrahydrodipicolinate reductase">
    <location>
        <begin position="1"/>
        <end position="276"/>
    </location>
</feature>
<feature type="active site" description="Proton donor/acceptor" evidence="1">
    <location>
        <position position="165"/>
    </location>
</feature>
<feature type="active site" description="Proton donor" evidence="1">
    <location>
        <position position="169"/>
    </location>
</feature>
<feature type="binding site" evidence="1">
    <location>
        <begin position="10"/>
        <end position="15"/>
    </location>
    <ligand>
        <name>NAD(+)</name>
        <dbReference type="ChEBI" id="CHEBI:57540"/>
    </ligand>
</feature>
<feature type="binding site" evidence="1">
    <location>
        <position position="36"/>
    </location>
    <ligand>
        <name>NAD(+)</name>
        <dbReference type="ChEBI" id="CHEBI:57540"/>
    </ligand>
</feature>
<feature type="binding site" evidence="1">
    <location>
        <begin position="109"/>
        <end position="111"/>
    </location>
    <ligand>
        <name>NAD(+)</name>
        <dbReference type="ChEBI" id="CHEBI:57540"/>
    </ligand>
</feature>
<feature type="binding site" evidence="1">
    <location>
        <position position="166"/>
    </location>
    <ligand>
        <name>(S)-2,3,4,5-tetrahydrodipicolinate</name>
        <dbReference type="ChEBI" id="CHEBI:16845"/>
    </ligand>
</feature>
<feature type="binding site" evidence="1">
    <location>
        <begin position="175"/>
        <end position="176"/>
    </location>
    <ligand>
        <name>(S)-2,3,4,5-tetrahydrodipicolinate</name>
        <dbReference type="ChEBI" id="CHEBI:16845"/>
    </ligand>
</feature>
<reference key="1">
    <citation type="journal article" date="2003" name="Proc. Natl. Acad. Sci. U.S.A.">
        <title>Genome sequence of the cyanobacterium Prochlorococcus marinus SS120, a nearly minimal oxyphototrophic genome.</title>
        <authorList>
            <person name="Dufresne A."/>
            <person name="Salanoubat M."/>
            <person name="Partensky F."/>
            <person name="Artiguenave F."/>
            <person name="Axmann I.M."/>
            <person name="Barbe V."/>
            <person name="Duprat S."/>
            <person name="Galperin M.Y."/>
            <person name="Koonin E.V."/>
            <person name="Le Gall F."/>
            <person name="Makarova K.S."/>
            <person name="Ostrowski M."/>
            <person name="Oztas S."/>
            <person name="Robert C."/>
            <person name="Rogozin I.B."/>
            <person name="Scanlan D.J."/>
            <person name="Tandeau de Marsac N."/>
            <person name="Weissenbach J."/>
            <person name="Wincker P."/>
            <person name="Wolf Y.I."/>
            <person name="Hess W.R."/>
        </authorList>
    </citation>
    <scope>NUCLEOTIDE SEQUENCE [LARGE SCALE GENOMIC DNA]</scope>
    <source>
        <strain>SARG / CCMP1375 / SS120</strain>
    </source>
</reference>
<sequence>MEKIPVLVAGALGKMGSEVIKAIYKSNDCELVAAIDNANEMEGVDIGTALGMDQMDVAVTADLEGSLCVASQSVRNSSGNAVLIDFTHPNVVYEHSRASIAYGVHPVIGTTGLSIVQLEELREFANKASIGAAIIPNFSVGMVLLQQAAAAAASFYDYAELTESHHNQKADAPSGTCIKTAEIIEEIGKSFNKTTIKEQESIKGSRGGLRESGLRLHSVRLPGIVAQQQVLFGSPGETYLLSHNTIDRSAYMPGVLHTIRKVRHLKSLVYGLEKIL</sequence>
<name>DAPB_PROMA</name>
<dbReference type="EC" id="1.17.1.8" evidence="1"/>
<dbReference type="EMBL" id="AE017126">
    <property type="protein sequence ID" value="AAP99948.1"/>
    <property type="molecule type" value="Genomic_DNA"/>
</dbReference>
<dbReference type="RefSeq" id="NP_875296.1">
    <property type="nucleotide sequence ID" value="NC_005042.1"/>
</dbReference>
<dbReference type="RefSeq" id="WP_011125056.1">
    <property type="nucleotide sequence ID" value="NC_005042.1"/>
</dbReference>
<dbReference type="SMR" id="Q7VC38"/>
<dbReference type="STRING" id="167539.Pro_0904"/>
<dbReference type="EnsemblBacteria" id="AAP99948">
    <property type="protein sequence ID" value="AAP99948"/>
    <property type="gene ID" value="Pro_0904"/>
</dbReference>
<dbReference type="KEGG" id="pma:Pro_0904"/>
<dbReference type="PATRIC" id="fig|167539.5.peg.951"/>
<dbReference type="eggNOG" id="COG0289">
    <property type="taxonomic scope" value="Bacteria"/>
</dbReference>
<dbReference type="HOGENOM" id="CLU_047479_0_1_3"/>
<dbReference type="OrthoDB" id="9790352at2"/>
<dbReference type="UniPathway" id="UPA00034">
    <property type="reaction ID" value="UER00018"/>
</dbReference>
<dbReference type="Proteomes" id="UP000001420">
    <property type="component" value="Chromosome"/>
</dbReference>
<dbReference type="GO" id="GO:0005829">
    <property type="term" value="C:cytosol"/>
    <property type="evidence" value="ECO:0007669"/>
    <property type="project" value="TreeGrafter"/>
</dbReference>
<dbReference type="GO" id="GO:0008839">
    <property type="term" value="F:4-hydroxy-tetrahydrodipicolinate reductase"/>
    <property type="evidence" value="ECO:0007669"/>
    <property type="project" value="UniProtKB-EC"/>
</dbReference>
<dbReference type="GO" id="GO:0051287">
    <property type="term" value="F:NAD binding"/>
    <property type="evidence" value="ECO:0007669"/>
    <property type="project" value="UniProtKB-UniRule"/>
</dbReference>
<dbReference type="GO" id="GO:0050661">
    <property type="term" value="F:NADP binding"/>
    <property type="evidence" value="ECO:0007669"/>
    <property type="project" value="UniProtKB-UniRule"/>
</dbReference>
<dbReference type="GO" id="GO:0016726">
    <property type="term" value="F:oxidoreductase activity, acting on CH or CH2 groups, NAD or NADP as acceptor"/>
    <property type="evidence" value="ECO:0007669"/>
    <property type="project" value="UniProtKB-UniRule"/>
</dbReference>
<dbReference type="GO" id="GO:0019877">
    <property type="term" value="P:diaminopimelate biosynthetic process"/>
    <property type="evidence" value="ECO:0007669"/>
    <property type="project" value="UniProtKB-UniRule"/>
</dbReference>
<dbReference type="GO" id="GO:0009089">
    <property type="term" value="P:lysine biosynthetic process via diaminopimelate"/>
    <property type="evidence" value="ECO:0007669"/>
    <property type="project" value="UniProtKB-UniRule"/>
</dbReference>
<dbReference type="CDD" id="cd02274">
    <property type="entry name" value="DHDPR_N"/>
    <property type="match status" value="1"/>
</dbReference>
<dbReference type="FunFam" id="3.30.360.10:FF:000009">
    <property type="entry name" value="4-hydroxy-tetrahydrodipicolinate reductase"/>
    <property type="match status" value="1"/>
</dbReference>
<dbReference type="Gene3D" id="3.30.360.10">
    <property type="entry name" value="Dihydrodipicolinate Reductase, domain 2"/>
    <property type="match status" value="1"/>
</dbReference>
<dbReference type="Gene3D" id="3.40.50.720">
    <property type="entry name" value="NAD(P)-binding Rossmann-like Domain"/>
    <property type="match status" value="1"/>
</dbReference>
<dbReference type="HAMAP" id="MF_00102">
    <property type="entry name" value="DapB"/>
    <property type="match status" value="1"/>
</dbReference>
<dbReference type="InterPro" id="IPR022663">
    <property type="entry name" value="DapB_C"/>
</dbReference>
<dbReference type="InterPro" id="IPR000846">
    <property type="entry name" value="DapB_N"/>
</dbReference>
<dbReference type="InterPro" id="IPR022664">
    <property type="entry name" value="DapB_N_CS"/>
</dbReference>
<dbReference type="InterPro" id="IPR023940">
    <property type="entry name" value="DHDPR_bac"/>
</dbReference>
<dbReference type="InterPro" id="IPR036291">
    <property type="entry name" value="NAD(P)-bd_dom_sf"/>
</dbReference>
<dbReference type="NCBIfam" id="TIGR00036">
    <property type="entry name" value="dapB"/>
    <property type="match status" value="1"/>
</dbReference>
<dbReference type="PANTHER" id="PTHR20836:SF0">
    <property type="entry name" value="4-HYDROXY-TETRAHYDRODIPICOLINATE REDUCTASE 1, CHLOROPLASTIC-RELATED"/>
    <property type="match status" value="1"/>
</dbReference>
<dbReference type="PANTHER" id="PTHR20836">
    <property type="entry name" value="DIHYDRODIPICOLINATE REDUCTASE"/>
    <property type="match status" value="1"/>
</dbReference>
<dbReference type="Pfam" id="PF05173">
    <property type="entry name" value="DapB_C"/>
    <property type="match status" value="1"/>
</dbReference>
<dbReference type="Pfam" id="PF01113">
    <property type="entry name" value="DapB_N"/>
    <property type="match status" value="1"/>
</dbReference>
<dbReference type="PIRSF" id="PIRSF000161">
    <property type="entry name" value="DHPR"/>
    <property type="match status" value="1"/>
</dbReference>
<dbReference type="SUPFAM" id="SSF55347">
    <property type="entry name" value="Glyceraldehyde-3-phosphate dehydrogenase-like, C-terminal domain"/>
    <property type="match status" value="1"/>
</dbReference>
<dbReference type="SUPFAM" id="SSF51735">
    <property type="entry name" value="NAD(P)-binding Rossmann-fold domains"/>
    <property type="match status" value="1"/>
</dbReference>
<dbReference type="PROSITE" id="PS01298">
    <property type="entry name" value="DAPB"/>
    <property type="match status" value="1"/>
</dbReference>
<proteinExistence type="inferred from homology"/>